<name>FOSB_BACVZ</name>
<organism>
    <name type="scientific">Bacillus velezensis (strain DSM 23117 / BGSC 10A6 / LMG 26770 / FZB42)</name>
    <name type="common">Bacillus amyloliquefaciens subsp. plantarum</name>
    <dbReference type="NCBI Taxonomy" id="326423"/>
    <lineage>
        <taxon>Bacteria</taxon>
        <taxon>Bacillati</taxon>
        <taxon>Bacillota</taxon>
        <taxon>Bacilli</taxon>
        <taxon>Bacillales</taxon>
        <taxon>Bacillaceae</taxon>
        <taxon>Bacillus</taxon>
        <taxon>Bacillus amyloliquefaciens group</taxon>
    </lineage>
</organism>
<proteinExistence type="inferred from homology"/>
<reference key="1">
    <citation type="journal article" date="2007" name="Nat. Biotechnol.">
        <title>Comparative analysis of the complete genome sequence of the plant growth-promoting bacterium Bacillus amyloliquefaciens FZB42.</title>
        <authorList>
            <person name="Chen X.H."/>
            <person name="Koumoutsi A."/>
            <person name="Scholz R."/>
            <person name="Eisenreich A."/>
            <person name="Schneider K."/>
            <person name="Heinemeyer I."/>
            <person name="Morgenstern B."/>
            <person name="Voss B."/>
            <person name="Hess W.R."/>
            <person name="Reva O."/>
            <person name="Junge H."/>
            <person name="Voigt B."/>
            <person name="Jungblut P.R."/>
            <person name="Vater J."/>
            <person name="Suessmuth R."/>
            <person name="Liesegang H."/>
            <person name="Strittmatter A."/>
            <person name="Gottschalk G."/>
            <person name="Borriss R."/>
        </authorList>
    </citation>
    <scope>NUCLEOTIDE SEQUENCE [LARGE SCALE GENOMIC DNA]</scope>
    <source>
        <strain>DSM 23117 / BGSC 10A6 / LMG 26770 / FZB42</strain>
    </source>
</reference>
<dbReference type="EC" id="2.5.1.-" evidence="1"/>
<dbReference type="EMBL" id="CP000560">
    <property type="protein sequence ID" value="ABS73480.1"/>
    <property type="molecule type" value="Genomic_DNA"/>
</dbReference>
<dbReference type="SMR" id="A7Z3A4"/>
<dbReference type="KEGG" id="bay:RBAM_011160"/>
<dbReference type="HOGENOM" id="CLU_121356_0_0_9"/>
<dbReference type="Proteomes" id="UP000001120">
    <property type="component" value="Chromosome"/>
</dbReference>
<dbReference type="GO" id="GO:0005737">
    <property type="term" value="C:cytoplasm"/>
    <property type="evidence" value="ECO:0007669"/>
    <property type="project" value="UniProtKB-SubCell"/>
</dbReference>
<dbReference type="GO" id="GO:0000287">
    <property type="term" value="F:magnesium ion binding"/>
    <property type="evidence" value="ECO:0007669"/>
    <property type="project" value="UniProtKB-UniRule"/>
</dbReference>
<dbReference type="GO" id="GO:0016765">
    <property type="term" value="F:transferase activity, transferring alkyl or aryl (other than methyl) groups"/>
    <property type="evidence" value="ECO:0007669"/>
    <property type="project" value="UniProtKB-UniRule"/>
</dbReference>
<dbReference type="GO" id="GO:0046677">
    <property type="term" value="P:response to antibiotic"/>
    <property type="evidence" value="ECO:0007669"/>
    <property type="project" value="UniProtKB-UniRule"/>
</dbReference>
<dbReference type="CDD" id="cd08363">
    <property type="entry name" value="FosB"/>
    <property type="match status" value="1"/>
</dbReference>
<dbReference type="Gene3D" id="3.10.180.10">
    <property type="entry name" value="2,3-Dihydroxybiphenyl 1,2-Dioxygenase, domain 1"/>
    <property type="match status" value="1"/>
</dbReference>
<dbReference type="HAMAP" id="MF_01512">
    <property type="entry name" value="FosB"/>
    <property type="match status" value="1"/>
</dbReference>
<dbReference type="InterPro" id="IPR051332">
    <property type="entry name" value="Fosfomycin_Res_Enzymes"/>
</dbReference>
<dbReference type="InterPro" id="IPR029068">
    <property type="entry name" value="Glyas_Bleomycin-R_OHBP_Dase"/>
</dbReference>
<dbReference type="InterPro" id="IPR004360">
    <property type="entry name" value="Glyas_Fos-R_dOase_dom"/>
</dbReference>
<dbReference type="InterPro" id="IPR022858">
    <property type="entry name" value="Metallothiol_Trafse_FosB"/>
</dbReference>
<dbReference type="InterPro" id="IPR037523">
    <property type="entry name" value="VOC"/>
</dbReference>
<dbReference type="NCBIfam" id="NF038306">
    <property type="entry name" value="fosM_gen"/>
    <property type="match status" value="1"/>
</dbReference>
<dbReference type="NCBIfam" id="NF003152">
    <property type="entry name" value="PRK04101.1"/>
    <property type="match status" value="1"/>
</dbReference>
<dbReference type="PANTHER" id="PTHR36113:SF6">
    <property type="entry name" value="FOSFOMYCIN RESISTANCE PROTEIN FOSX"/>
    <property type="match status" value="1"/>
</dbReference>
<dbReference type="PANTHER" id="PTHR36113">
    <property type="entry name" value="LYASE, PUTATIVE-RELATED-RELATED"/>
    <property type="match status" value="1"/>
</dbReference>
<dbReference type="Pfam" id="PF00903">
    <property type="entry name" value="Glyoxalase"/>
    <property type="match status" value="1"/>
</dbReference>
<dbReference type="SUPFAM" id="SSF54593">
    <property type="entry name" value="Glyoxalase/Bleomycin resistance protein/Dihydroxybiphenyl dioxygenase"/>
    <property type="match status" value="1"/>
</dbReference>
<dbReference type="PROSITE" id="PS51819">
    <property type="entry name" value="VOC"/>
    <property type="match status" value="1"/>
</dbReference>
<keyword id="KW-0046">Antibiotic resistance</keyword>
<keyword id="KW-0963">Cytoplasm</keyword>
<keyword id="KW-0460">Magnesium</keyword>
<keyword id="KW-0479">Metal-binding</keyword>
<keyword id="KW-0808">Transferase</keyword>
<comment type="function">
    <text evidence="1">Metallothiol transferase which confers resistance to fosfomycin by catalyzing the addition of a thiol cofactor to fosfomycin. L-cysteine is probably the physiological thiol donor.</text>
</comment>
<comment type="cofactor">
    <cofactor evidence="1">
        <name>Mg(2+)</name>
        <dbReference type="ChEBI" id="CHEBI:18420"/>
    </cofactor>
</comment>
<comment type="subunit">
    <text evidence="1">Homodimer.</text>
</comment>
<comment type="subcellular location">
    <subcellularLocation>
        <location evidence="1">Cytoplasm</location>
    </subcellularLocation>
</comment>
<comment type="similarity">
    <text evidence="1">Belongs to the fosfomycin resistance protein family. FosB subfamily.</text>
</comment>
<feature type="chain" id="PRO_0000315253" description="Metallothiol transferase FosB">
    <location>
        <begin position="1"/>
        <end position="147"/>
    </location>
</feature>
<feature type="domain" description="VOC" evidence="2">
    <location>
        <begin position="12"/>
        <end position="127"/>
    </location>
</feature>
<feature type="active site" description="Proton donor/acceptor" evidence="2">
    <location>
        <position position="123"/>
    </location>
</feature>
<feature type="binding site" evidence="1">
    <location>
        <position position="15"/>
    </location>
    <ligand>
        <name>Mg(2+)</name>
        <dbReference type="ChEBI" id="CHEBI:18420"/>
    </ligand>
</feature>
<feature type="binding site" evidence="1">
    <location>
        <position position="74"/>
    </location>
    <ligand>
        <name>Mg(2+)</name>
        <dbReference type="ChEBI" id="CHEBI:18420"/>
    </ligand>
</feature>
<feature type="binding site" evidence="1">
    <location>
        <position position="123"/>
    </location>
    <ligand>
        <name>Mg(2+)</name>
        <dbReference type="ChEBI" id="CHEBI:18420"/>
    </ligand>
</feature>
<accession>A7Z3A4</accession>
<protein>
    <recommendedName>
        <fullName evidence="1">Metallothiol transferase FosB</fullName>
        <ecNumber evidence="1">2.5.1.-</ecNumber>
    </recommendedName>
    <alternativeName>
        <fullName evidence="1">Fosfomycin resistance protein</fullName>
    </alternativeName>
</protein>
<sequence>MLNEVGKINIKGINHLLFSVSNLEKSIEFYEKVFHAQLLVKGQKTAYFDLNGLWLALNLEADIPRNEIHKSYTHMAFTIDPKDFDAIHHRLKNLNVNILNGRPRDKQDQKSIYFTDPDGHKFEFHTGTLQDRLSYYKKDKPHMKFYI</sequence>
<gene>
    <name evidence="1" type="primary">fosB</name>
    <name type="ordered locus">RBAM_011160</name>
</gene>
<evidence type="ECO:0000255" key="1">
    <source>
        <dbReference type="HAMAP-Rule" id="MF_01512"/>
    </source>
</evidence>
<evidence type="ECO:0000255" key="2">
    <source>
        <dbReference type="PROSITE-ProRule" id="PRU01163"/>
    </source>
</evidence>